<organism>
    <name type="scientific">Halobacterium salinarum (strain ATCC 29341 / DSM 671 / R1)</name>
    <dbReference type="NCBI Taxonomy" id="478009"/>
    <lineage>
        <taxon>Archaea</taxon>
        <taxon>Methanobacteriati</taxon>
        <taxon>Methanobacteriota</taxon>
        <taxon>Stenosarchaea group</taxon>
        <taxon>Halobacteria</taxon>
        <taxon>Halobacteriales</taxon>
        <taxon>Halobacteriaceae</taxon>
        <taxon>Halobacterium</taxon>
        <taxon>Halobacterium salinarum NRC-34001</taxon>
    </lineage>
</organism>
<feature type="chain" id="PRO_1000115678" description="A-type ATP synthase subunit E">
    <location>
        <begin position="1"/>
        <end position="195"/>
    </location>
</feature>
<accession>B0R758</accession>
<comment type="function">
    <text evidence="1">Component of the A-type ATP synthase that produces ATP from ADP in the presence of a proton gradient across the membrane.</text>
</comment>
<comment type="subunit">
    <text evidence="1">Has multiple subunits with at least A(3), B(3), C, D, E, F, H, I and proteolipid K(x).</text>
</comment>
<comment type="subcellular location">
    <subcellularLocation>
        <location evidence="1">Cell membrane</location>
        <topology evidence="1">Peripheral membrane protein</topology>
    </subcellularLocation>
</comment>
<comment type="similarity">
    <text evidence="1">Belongs to the V-ATPase E subunit family.</text>
</comment>
<reference key="1">
    <citation type="journal article" date="2008" name="Genomics">
        <title>Evolution in the laboratory: the genome of Halobacterium salinarum strain R1 compared to that of strain NRC-1.</title>
        <authorList>
            <person name="Pfeiffer F."/>
            <person name="Schuster S.C."/>
            <person name="Broicher A."/>
            <person name="Falb M."/>
            <person name="Palm P."/>
            <person name="Rodewald K."/>
            <person name="Ruepp A."/>
            <person name="Soppa J."/>
            <person name="Tittor J."/>
            <person name="Oesterhelt D."/>
        </authorList>
    </citation>
    <scope>NUCLEOTIDE SEQUENCE [LARGE SCALE GENOMIC DNA]</scope>
    <source>
        <strain>ATCC 29341 / DSM 671 / R1</strain>
    </source>
</reference>
<protein>
    <recommendedName>
        <fullName evidence="1">A-type ATP synthase subunit E</fullName>
    </recommendedName>
</protein>
<dbReference type="EMBL" id="AM774415">
    <property type="protein sequence ID" value="CAP14577.1"/>
    <property type="molecule type" value="Genomic_DNA"/>
</dbReference>
<dbReference type="RefSeq" id="WP_010903582.1">
    <property type="nucleotide sequence ID" value="NC_010364.1"/>
</dbReference>
<dbReference type="SMR" id="B0R758"/>
<dbReference type="EnsemblBacteria" id="CAP14577">
    <property type="protein sequence ID" value="CAP14577"/>
    <property type="gene ID" value="OE_3988R"/>
</dbReference>
<dbReference type="KEGG" id="hsl:OE_3988R"/>
<dbReference type="HOGENOM" id="CLU_120786_0_0_2"/>
<dbReference type="Proteomes" id="UP000001321">
    <property type="component" value="Chromosome"/>
</dbReference>
<dbReference type="GO" id="GO:0005886">
    <property type="term" value="C:plasma membrane"/>
    <property type="evidence" value="ECO:0007669"/>
    <property type="project" value="UniProtKB-SubCell"/>
</dbReference>
<dbReference type="GO" id="GO:0033178">
    <property type="term" value="C:proton-transporting two-sector ATPase complex, catalytic domain"/>
    <property type="evidence" value="ECO:0007669"/>
    <property type="project" value="InterPro"/>
</dbReference>
<dbReference type="GO" id="GO:0005524">
    <property type="term" value="F:ATP binding"/>
    <property type="evidence" value="ECO:0007669"/>
    <property type="project" value="UniProtKB-UniRule"/>
</dbReference>
<dbReference type="GO" id="GO:0046933">
    <property type="term" value="F:proton-transporting ATP synthase activity, rotational mechanism"/>
    <property type="evidence" value="ECO:0007669"/>
    <property type="project" value="UniProtKB-UniRule"/>
</dbReference>
<dbReference type="GO" id="GO:0046961">
    <property type="term" value="F:proton-transporting ATPase activity, rotational mechanism"/>
    <property type="evidence" value="ECO:0007669"/>
    <property type="project" value="InterPro"/>
</dbReference>
<dbReference type="GO" id="GO:0042777">
    <property type="term" value="P:proton motive force-driven plasma membrane ATP synthesis"/>
    <property type="evidence" value="ECO:0007669"/>
    <property type="project" value="UniProtKB-UniRule"/>
</dbReference>
<dbReference type="Gene3D" id="3.30.2320.30">
    <property type="entry name" value="ATP synthase, E subunit, C-terminal"/>
    <property type="match status" value="1"/>
</dbReference>
<dbReference type="Gene3D" id="1.20.5.620">
    <property type="entry name" value="F1F0 ATP synthase subunit B, membrane domain"/>
    <property type="match status" value="1"/>
</dbReference>
<dbReference type="HAMAP" id="MF_00311">
    <property type="entry name" value="ATP_synth_E_arch"/>
    <property type="match status" value="1"/>
</dbReference>
<dbReference type="InterPro" id="IPR038495">
    <property type="entry name" value="ATPase_E_C"/>
</dbReference>
<dbReference type="InterPro" id="IPR002842">
    <property type="entry name" value="ATPase_V1_Esu"/>
</dbReference>
<dbReference type="NCBIfam" id="NF002629">
    <property type="entry name" value="PRK02292.1"/>
    <property type="match status" value="1"/>
</dbReference>
<dbReference type="PANTHER" id="PTHR45715">
    <property type="entry name" value="ATPASE H+-TRANSPORTING V1 SUBUNIT E1A-RELATED"/>
    <property type="match status" value="1"/>
</dbReference>
<dbReference type="Pfam" id="PF01991">
    <property type="entry name" value="vATP-synt_E"/>
    <property type="match status" value="1"/>
</dbReference>
<dbReference type="SUPFAM" id="SSF160527">
    <property type="entry name" value="V-type ATPase subunit E-like"/>
    <property type="match status" value="1"/>
</dbReference>
<keyword id="KW-0066">ATP synthesis</keyword>
<keyword id="KW-1003">Cell membrane</keyword>
<keyword id="KW-0375">Hydrogen ion transport</keyword>
<keyword id="KW-0406">Ion transport</keyword>
<keyword id="KW-0472">Membrane</keyword>
<keyword id="KW-0813">Transport</keyword>
<gene>
    <name evidence="1" type="primary">atpE</name>
    <name type="ordered locus">OE_3988R</name>
</gene>
<evidence type="ECO:0000255" key="1">
    <source>
        <dbReference type="HAMAP-Rule" id="MF_00311"/>
    </source>
</evidence>
<proteinExistence type="inferred from homology"/>
<sequence length="195" mass="21782">MSLETVVEDIRDEARERAKEIRADADERADEIVAEAEADADDIIADAEAEVTAEIDQEREQQLSSAELEAKQMRLEARRDALQSVRSAVEDRIVALDGDEREELTRELLDAASTEFDGADTVRVFGRADDEALISEILDDYDGYEYAGEYDCLGGVVVESDASRIRVNNTFDSILADAWENNLKAISARLFDEEQ</sequence>
<name>AATE_HALS3</name>